<evidence type="ECO:0000250" key="1"/>
<evidence type="ECO:0000305" key="2"/>
<keyword id="KW-0131">Cell cycle</keyword>
<keyword id="KW-0132">Cell division</keyword>
<keyword id="KW-0143">Chaperone</keyword>
<keyword id="KW-0963">Cytoplasm</keyword>
<keyword id="KW-0413">Isomerase</keyword>
<keyword id="KW-1185">Reference proteome</keyword>
<keyword id="KW-0697">Rotamase</keyword>
<gene>
    <name type="primary">tig</name>
    <name type="ordered locus">CT_707</name>
</gene>
<sequence length="442" mass="50101">MSSRDFSNDLFSINIEENAGCVVSAKVQANPLVTQKCHKEALKTVKKNVVLPGFRKGKAPDNIVESRYSTQMEQELRRLFLRASFEALSQMCDRKPLSPKAVRSSAIDTCNPVNGGSVSFLYEAFPVIPSLPWEQLSLPDPEPVKEISEEDLENGLKNVAYFFATKTPVTRPSQEGDFISLSLYVSKRGDENSTPVAIFENKYFKISEEDMTDSFKARFLNVSTGHRVEEEIGSEDIQSFLNGDLLTFTVNAVIEISSPEMDDEKARQLQAESLEDLKKKLRIQLENQAKEAQHQKRFSDAEDALAQLIDFDLPESLLQEREELLSREKLLNARLVKYCSDSELEEQKQALLEEAKADARKAVKLLFLTQKVFSEKGLSISREELQYMMDVCSRERFGGYPPKDISNEMIQELVLVARDRLTYRKAIEAISSEKKDLEVVPS</sequence>
<organism>
    <name type="scientific">Chlamydia trachomatis serovar D (strain ATCC VR-885 / DSM 19411 / UW-3/Cx)</name>
    <dbReference type="NCBI Taxonomy" id="272561"/>
    <lineage>
        <taxon>Bacteria</taxon>
        <taxon>Pseudomonadati</taxon>
        <taxon>Chlamydiota</taxon>
        <taxon>Chlamydiia</taxon>
        <taxon>Chlamydiales</taxon>
        <taxon>Chlamydiaceae</taxon>
        <taxon>Chlamydia/Chlamydophila group</taxon>
        <taxon>Chlamydia</taxon>
    </lineage>
</organism>
<comment type="function">
    <text evidence="1">Involved in protein export. Acts as a chaperone by maintaining the newly synthesized protein in an open conformation. Functions as a peptidyl-prolyl cis-trans isomerase (By similarity).</text>
</comment>
<comment type="catalytic activity">
    <reaction>
        <text>[protein]-peptidylproline (omega=180) = [protein]-peptidylproline (omega=0)</text>
        <dbReference type="Rhea" id="RHEA:16237"/>
        <dbReference type="Rhea" id="RHEA-COMP:10747"/>
        <dbReference type="Rhea" id="RHEA-COMP:10748"/>
        <dbReference type="ChEBI" id="CHEBI:83833"/>
        <dbReference type="ChEBI" id="CHEBI:83834"/>
        <dbReference type="EC" id="5.2.1.8"/>
    </reaction>
</comment>
<comment type="subcellular location">
    <subcellularLocation>
        <location>Cytoplasm</location>
    </subcellularLocation>
    <text evidence="1">About half TF is bound to the ribosome near the polypeptide exit tunnel while the other half is free in the cytoplasm.</text>
</comment>
<comment type="domain">
    <text evidence="1">Consists of 3 domains; the N-terminus binds the ribosome, the middle domain has PPIase activity, while the C-terminus has intrinsic chaperone activity on its own.</text>
</comment>
<comment type="similarity">
    <text evidence="2">Belongs to the FKBP-type PPIase family. Tig subfamily.</text>
</comment>
<feature type="chain" id="PRO_0000179335" description="Trigger factor">
    <location>
        <begin position="1"/>
        <end position="442"/>
    </location>
</feature>
<feature type="domain" description="PPIase FKBP-type">
    <location>
        <begin position="176"/>
        <end position="259"/>
    </location>
</feature>
<protein>
    <recommendedName>
        <fullName>Trigger factor</fullName>
        <shortName>TF</shortName>
        <ecNumber>5.2.1.8</ecNumber>
    </recommendedName>
    <alternativeName>
        <fullName>PPIase</fullName>
    </alternativeName>
</protein>
<name>TIG_CHLTR</name>
<dbReference type="EC" id="5.2.1.8"/>
<dbReference type="EMBL" id="AE001273">
    <property type="protein sequence ID" value="AAC68302.1"/>
    <property type="molecule type" value="Genomic_DNA"/>
</dbReference>
<dbReference type="PIR" id="D71481">
    <property type="entry name" value="D71481"/>
</dbReference>
<dbReference type="RefSeq" id="NP_220226.1">
    <property type="nucleotide sequence ID" value="NC_000117.1"/>
</dbReference>
<dbReference type="RefSeq" id="WP_010725310.1">
    <property type="nucleotide sequence ID" value="NC_000117.1"/>
</dbReference>
<dbReference type="SMR" id="O84713"/>
<dbReference type="FunCoup" id="O84713">
    <property type="interactions" value="294"/>
</dbReference>
<dbReference type="STRING" id="272561.CT_707"/>
<dbReference type="EnsemblBacteria" id="AAC68302">
    <property type="protein sequence ID" value="AAC68302"/>
    <property type="gene ID" value="CT_707"/>
</dbReference>
<dbReference type="GeneID" id="884496"/>
<dbReference type="KEGG" id="ctr:CT_707"/>
<dbReference type="PATRIC" id="fig|272561.5.peg.778"/>
<dbReference type="HOGENOM" id="CLU_065756_0_0_0"/>
<dbReference type="InParanoid" id="O84713"/>
<dbReference type="OrthoDB" id="9767721at2"/>
<dbReference type="Proteomes" id="UP000000431">
    <property type="component" value="Chromosome"/>
</dbReference>
<dbReference type="GO" id="GO:0005737">
    <property type="term" value="C:cytoplasm"/>
    <property type="evidence" value="ECO:0007669"/>
    <property type="project" value="UniProtKB-SubCell"/>
</dbReference>
<dbReference type="GO" id="GO:0003755">
    <property type="term" value="F:peptidyl-prolyl cis-trans isomerase activity"/>
    <property type="evidence" value="ECO:0000318"/>
    <property type="project" value="GO_Central"/>
</dbReference>
<dbReference type="GO" id="GO:0044183">
    <property type="term" value="F:protein folding chaperone"/>
    <property type="evidence" value="ECO:0000318"/>
    <property type="project" value="GO_Central"/>
</dbReference>
<dbReference type="GO" id="GO:0043022">
    <property type="term" value="F:ribosome binding"/>
    <property type="evidence" value="ECO:0000318"/>
    <property type="project" value="GO_Central"/>
</dbReference>
<dbReference type="GO" id="GO:0051083">
    <property type="term" value="P:'de novo' cotranslational protein folding"/>
    <property type="evidence" value="ECO:0000318"/>
    <property type="project" value="GO_Central"/>
</dbReference>
<dbReference type="GO" id="GO:0051301">
    <property type="term" value="P:cell division"/>
    <property type="evidence" value="ECO:0007669"/>
    <property type="project" value="UniProtKB-KW"/>
</dbReference>
<dbReference type="GO" id="GO:0061077">
    <property type="term" value="P:chaperone-mediated protein folding"/>
    <property type="evidence" value="ECO:0000318"/>
    <property type="project" value="GO_Central"/>
</dbReference>
<dbReference type="GO" id="GO:0015031">
    <property type="term" value="P:protein transport"/>
    <property type="evidence" value="ECO:0007669"/>
    <property type="project" value="UniProtKB-UniRule"/>
</dbReference>
<dbReference type="GO" id="GO:0043335">
    <property type="term" value="P:protein unfolding"/>
    <property type="evidence" value="ECO:0000318"/>
    <property type="project" value="GO_Central"/>
</dbReference>
<dbReference type="FunFam" id="3.10.50.40:FF:000058">
    <property type="entry name" value="Trigger factor"/>
    <property type="match status" value="1"/>
</dbReference>
<dbReference type="Gene3D" id="3.10.50.40">
    <property type="match status" value="1"/>
</dbReference>
<dbReference type="Gene3D" id="3.30.70.1050">
    <property type="entry name" value="Trigger factor ribosome-binding domain"/>
    <property type="match status" value="1"/>
</dbReference>
<dbReference type="Gene3D" id="1.10.3120.10">
    <property type="entry name" value="Trigger factor, C-terminal domain"/>
    <property type="match status" value="1"/>
</dbReference>
<dbReference type="HAMAP" id="MF_00303">
    <property type="entry name" value="Trigger_factor_Tig"/>
    <property type="match status" value="1"/>
</dbReference>
<dbReference type="InterPro" id="IPR046357">
    <property type="entry name" value="PPIase_dom_sf"/>
</dbReference>
<dbReference type="InterPro" id="IPR005215">
    <property type="entry name" value="Trig_fac"/>
</dbReference>
<dbReference type="InterPro" id="IPR008880">
    <property type="entry name" value="Trigger_fac_C"/>
</dbReference>
<dbReference type="InterPro" id="IPR037041">
    <property type="entry name" value="Trigger_fac_C_sf"/>
</dbReference>
<dbReference type="InterPro" id="IPR008881">
    <property type="entry name" value="Trigger_fac_ribosome-bd_bac"/>
</dbReference>
<dbReference type="InterPro" id="IPR036611">
    <property type="entry name" value="Trigger_fac_ribosome-bd_sf"/>
</dbReference>
<dbReference type="InterPro" id="IPR027304">
    <property type="entry name" value="Trigger_fact/SurA_dom_sf"/>
</dbReference>
<dbReference type="NCBIfam" id="TIGR00115">
    <property type="entry name" value="tig"/>
    <property type="match status" value="1"/>
</dbReference>
<dbReference type="Pfam" id="PF05698">
    <property type="entry name" value="Trigger_C"/>
    <property type="match status" value="1"/>
</dbReference>
<dbReference type="Pfam" id="PF05697">
    <property type="entry name" value="Trigger_N"/>
    <property type="match status" value="1"/>
</dbReference>
<dbReference type="PIRSF" id="PIRSF003095">
    <property type="entry name" value="Trigger_factor"/>
    <property type="match status" value="1"/>
</dbReference>
<dbReference type="SUPFAM" id="SSF109998">
    <property type="entry name" value="Triger factor/SurA peptide-binding domain-like"/>
    <property type="match status" value="1"/>
</dbReference>
<dbReference type="SUPFAM" id="SSF102735">
    <property type="entry name" value="Trigger factor ribosome-binding domain"/>
    <property type="match status" value="1"/>
</dbReference>
<proteinExistence type="inferred from homology"/>
<reference key="1">
    <citation type="journal article" date="1998" name="Science">
        <title>Genome sequence of an obligate intracellular pathogen of humans: Chlamydia trachomatis.</title>
        <authorList>
            <person name="Stephens R.S."/>
            <person name="Kalman S."/>
            <person name="Lammel C.J."/>
            <person name="Fan J."/>
            <person name="Marathe R."/>
            <person name="Aravind L."/>
            <person name="Mitchell W.P."/>
            <person name="Olinger L."/>
            <person name="Tatusov R.L."/>
            <person name="Zhao Q."/>
            <person name="Koonin E.V."/>
            <person name="Davis R.W."/>
        </authorList>
    </citation>
    <scope>NUCLEOTIDE SEQUENCE [LARGE SCALE GENOMIC DNA]</scope>
    <source>
        <strain>ATCC VR-885 / DSM 19411 / UW-3/Cx</strain>
    </source>
</reference>
<accession>O84713</accession>